<comment type="catalytic activity">
    <reaction evidence="1">
        <text>(6R)-10-formyltetrahydrofolate + 5-amino-1-(5-phospho-beta-D-ribosyl)imidazole-4-carboxamide = 5-formamido-1-(5-phospho-D-ribosyl)imidazole-4-carboxamide + (6S)-5,6,7,8-tetrahydrofolate</text>
        <dbReference type="Rhea" id="RHEA:22192"/>
        <dbReference type="ChEBI" id="CHEBI:57453"/>
        <dbReference type="ChEBI" id="CHEBI:58467"/>
        <dbReference type="ChEBI" id="CHEBI:58475"/>
        <dbReference type="ChEBI" id="CHEBI:195366"/>
        <dbReference type="EC" id="2.1.2.3"/>
    </reaction>
</comment>
<comment type="catalytic activity">
    <reaction evidence="1">
        <text>IMP + H2O = 5-formamido-1-(5-phospho-D-ribosyl)imidazole-4-carboxamide</text>
        <dbReference type="Rhea" id="RHEA:18445"/>
        <dbReference type="ChEBI" id="CHEBI:15377"/>
        <dbReference type="ChEBI" id="CHEBI:58053"/>
        <dbReference type="ChEBI" id="CHEBI:58467"/>
        <dbReference type="EC" id="3.5.4.10"/>
    </reaction>
</comment>
<comment type="pathway">
    <text evidence="1">Purine metabolism; IMP biosynthesis via de novo pathway; 5-formamido-1-(5-phospho-D-ribosyl)imidazole-4-carboxamide from 5-amino-1-(5-phospho-D-ribosyl)imidazole-4-carboxamide (10-formyl THF route): step 1/1.</text>
</comment>
<comment type="pathway">
    <text evidence="1">Purine metabolism; IMP biosynthesis via de novo pathway; IMP from 5-formamido-1-(5-phospho-D-ribosyl)imidazole-4-carboxamide: step 1/1.</text>
</comment>
<comment type="domain">
    <text evidence="1">The IMP cyclohydrolase activity resides in the N-terminal region.</text>
</comment>
<comment type="similarity">
    <text evidence="1">Belongs to the PurH family.</text>
</comment>
<proteinExistence type="inferred from homology"/>
<protein>
    <recommendedName>
        <fullName evidence="1">Bifunctional purine biosynthesis protein PurH</fullName>
    </recommendedName>
    <domain>
        <recommendedName>
            <fullName evidence="1">Phosphoribosylaminoimidazolecarboxamide formyltransferase</fullName>
            <ecNumber evidence="1">2.1.2.3</ecNumber>
        </recommendedName>
        <alternativeName>
            <fullName evidence="1">AICAR transformylase</fullName>
        </alternativeName>
    </domain>
    <domain>
        <recommendedName>
            <fullName evidence="1">IMP cyclohydrolase</fullName>
            <ecNumber evidence="1">3.5.4.10</ecNumber>
        </recommendedName>
        <alternativeName>
            <fullName evidence="1">ATIC</fullName>
        </alternativeName>
        <alternativeName>
            <fullName evidence="1">IMP synthase</fullName>
        </alternativeName>
        <alternativeName>
            <fullName evidence="1">Inosinicase</fullName>
        </alternativeName>
    </domain>
</protein>
<feature type="chain" id="PRO_1000018993" description="Bifunctional purine biosynthesis protein PurH">
    <location>
        <begin position="1"/>
        <end position="529"/>
    </location>
</feature>
<feature type="domain" description="MGS-like" evidence="2">
    <location>
        <begin position="1"/>
        <end position="148"/>
    </location>
</feature>
<organism>
    <name type="scientific">Yersinia pestis (strain Pestoides F)</name>
    <dbReference type="NCBI Taxonomy" id="386656"/>
    <lineage>
        <taxon>Bacteria</taxon>
        <taxon>Pseudomonadati</taxon>
        <taxon>Pseudomonadota</taxon>
        <taxon>Gammaproteobacteria</taxon>
        <taxon>Enterobacterales</taxon>
        <taxon>Yersiniaceae</taxon>
        <taxon>Yersinia</taxon>
    </lineage>
</organism>
<sequence length="529" mass="57154">MQQRRPIRRALLSVSDKAGIIEFAQALSQRGIELLSTGGTARLLADAGLPVTEVSDYTGFPEMMDGRVKTLHPKVHGGILGRRGQDDGIMAQHGIQPIDIVVVNLYPFAQTVARPDCSLEDAVENIDIGGPTMVRSAAKNHKDVAIVVKSSDYPAIITELDNNDGSLTYPTRFNLAIKAFEHTAAYDSMIANYFGTLVPPYHGDTEQPSGHFPRTLNLNYIKKQDMRYGENSHQQAAFYIEEDVKEASVATAQQLQGKALSYNNIADTDAALECVKEFSEPACVIVKHANPCGVAIGDSILAAYERAYQTDPTSAFGGIIAFNRELDAATASAIISRQFVEVIIAPTVSSDALALLAAKQNVRVLTCGQWQARSAGLDFKRVNGGLLVQERDLGMVTAADLRVVSKRQPTEQELRDALFCWKVAKFVKSNAIVYARDNMTIGIGAGQMSRVYSAKIAGIKAADEGLEVAGSAMASDAFFPFRDGIDAAAAVGITCVIQPGGSIRDDEVIAAADEHSIAMIFTDMRHFRH</sequence>
<dbReference type="EC" id="2.1.2.3" evidence="1"/>
<dbReference type="EC" id="3.5.4.10" evidence="1"/>
<dbReference type="EMBL" id="CP000668">
    <property type="protein sequence ID" value="ABP42076.1"/>
    <property type="molecule type" value="Genomic_DNA"/>
</dbReference>
<dbReference type="RefSeq" id="WP_002210692.1">
    <property type="nucleotide sequence ID" value="NZ_CP009715.1"/>
</dbReference>
<dbReference type="SMR" id="A4TS14"/>
<dbReference type="GeneID" id="57974989"/>
<dbReference type="KEGG" id="ypp:YPDSF_3726"/>
<dbReference type="PATRIC" id="fig|386656.14.peg.798"/>
<dbReference type="UniPathway" id="UPA00074">
    <property type="reaction ID" value="UER00133"/>
</dbReference>
<dbReference type="UniPathway" id="UPA00074">
    <property type="reaction ID" value="UER00135"/>
</dbReference>
<dbReference type="GO" id="GO:0005829">
    <property type="term" value="C:cytosol"/>
    <property type="evidence" value="ECO:0007669"/>
    <property type="project" value="TreeGrafter"/>
</dbReference>
<dbReference type="GO" id="GO:0003937">
    <property type="term" value="F:IMP cyclohydrolase activity"/>
    <property type="evidence" value="ECO:0007669"/>
    <property type="project" value="UniProtKB-UniRule"/>
</dbReference>
<dbReference type="GO" id="GO:0004643">
    <property type="term" value="F:phosphoribosylaminoimidazolecarboxamide formyltransferase activity"/>
    <property type="evidence" value="ECO:0007669"/>
    <property type="project" value="UniProtKB-UniRule"/>
</dbReference>
<dbReference type="GO" id="GO:0006189">
    <property type="term" value="P:'de novo' IMP biosynthetic process"/>
    <property type="evidence" value="ECO:0007669"/>
    <property type="project" value="UniProtKB-UniRule"/>
</dbReference>
<dbReference type="CDD" id="cd01421">
    <property type="entry name" value="IMPCH"/>
    <property type="match status" value="1"/>
</dbReference>
<dbReference type="FunFam" id="3.40.140.20:FF:000001">
    <property type="entry name" value="Bifunctional purine biosynthesis protein PurH"/>
    <property type="match status" value="1"/>
</dbReference>
<dbReference type="FunFam" id="3.40.140.20:FF:000002">
    <property type="entry name" value="Bifunctional purine biosynthesis protein PurH"/>
    <property type="match status" value="1"/>
</dbReference>
<dbReference type="FunFam" id="3.40.50.1380:FF:000001">
    <property type="entry name" value="Bifunctional purine biosynthesis protein PurH"/>
    <property type="match status" value="1"/>
</dbReference>
<dbReference type="Gene3D" id="3.40.140.20">
    <property type="match status" value="2"/>
</dbReference>
<dbReference type="Gene3D" id="3.40.50.1380">
    <property type="entry name" value="Methylglyoxal synthase-like domain"/>
    <property type="match status" value="1"/>
</dbReference>
<dbReference type="HAMAP" id="MF_00139">
    <property type="entry name" value="PurH"/>
    <property type="match status" value="1"/>
</dbReference>
<dbReference type="InterPro" id="IPR024051">
    <property type="entry name" value="AICAR_Tfase_dup_dom_sf"/>
</dbReference>
<dbReference type="InterPro" id="IPR016193">
    <property type="entry name" value="Cytidine_deaminase-like"/>
</dbReference>
<dbReference type="InterPro" id="IPR011607">
    <property type="entry name" value="MGS-like_dom"/>
</dbReference>
<dbReference type="InterPro" id="IPR036914">
    <property type="entry name" value="MGS-like_dom_sf"/>
</dbReference>
<dbReference type="InterPro" id="IPR002695">
    <property type="entry name" value="PurH-like"/>
</dbReference>
<dbReference type="NCBIfam" id="NF002049">
    <property type="entry name" value="PRK00881.1"/>
    <property type="match status" value="1"/>
</dbReference>
<dbReference type="NCBIfam" id="TIGR00355">
    <property type="entry name" value="purH"/>
    <property type="match status" value="1"/>
</dbReference>
<dbReference type="PANTHER" id="PTHR11692:SF0">
    <property type="entry name" value="BIFUNCTIONAL PURINE BIOSYNTHESIS PROTEIN ATIC"/>
    <property type="match status" value="1"/>
</dbReference>
<dbReference type="PANTHER" id="PTHR11692">
    <property type="entry name" value="BIFUNCTIONAL PURINE BIOSYNTHESIS PROTEIN PURH"/>
    <property type="match status" value="1"/>
</dbReference>
<dbReference type="Pfam" id="PF01808">
    <property type="entry name" value="AICARFT_IMPCHas"/>
    <property type="match status" value="1"/>
</dbReference>
<dbReference type="Pfam" id="PF02142">
    <property type="entry name" value="MGS"/>
    <property type="match status" value="1"/>
</dbReference>
<dbReference type="PIRSF" id="PIRSF000414">
    <property type="entry name" value="AICARFT_IMPCHas"/>
    <property type="match status" value="1"/>
</dbReference>
<dbReference type="SMART" id="SM00798">
    <property type="entry name" value="AICARFT_IMPCHas"/>
    <property type="match status" value="1"/>
</dbReference>
<dbReference type="SMART" id="SM00851">
    <property type="entry name" value="MGS"/>
    <property type="match status" value="1"/>
</dbReference>
<dbReference type="SUPFAM" id="SSF53927">
    <property type="entry name" value="Cytidine deaminase-like"/>
    <property type="match status" value="1"/>
</dbReference>
<dbReference type="SUPFAM" id="SSF52335">
    <property type="entry name" value="Methylglyoxal synthase-like"/>
    <property type="match status" value="1"/>
</dbReference>
<dbReference type="PROSITE" id="PS51855">
    <property type="entry name" value="MGS"/>
    <property type="match status" value="1"/>
</dbReference>
<name>PUR9_YERPP</name>
<evidence type="ECO:0000255" key="1">
    <source>
        <dbReference type="HAMAP-Rule" id="MF_00139"/>
    </source>
</evidence>
<evidence type="ECO:0000255" key="2">
    <source>
        <dbReference type="PROSITE-ProRule" id="PRU01202"/>
    </source>
</evidence>
<gene>
    <name evidence="1" type="primary">purH</name>
    <name type="ordered locus">YPDSF_3726</name>
</gene>
<keyword id="KW-0378">Hydrolase</keyword>
<keyword id="KW-0511">Multifunctional enzyme</keyword>
<keyword id="KW-0658">Purine biosynthesis</keyword>
<keyword id="KW-0808">Transferase</keyword>
<accession>A4TS14</accession>
<reference key="1">
    <citation type="submission" date="2007-02" db="EMBL/GenBank/DDBJ databases">
        <title>Complete sequence of chromosome of Yersinia pestis Pestoides F.</title>
        <authorList>
            <consortium name="US DOE Joint Genome Institute"/>
            <person name="Copeland A."/>
            <person name="Lucas S."/>
            <person name="Lapidus A."/>
            <person name="Barry K."/>
            <person name="Detter J.C."/>
            <person name="Glavina del Rio T."/>
            <person name="Hammon N."/>
            <person name="Israni S."/>
            <person name="Dalin E."/>
            <person name="Tice H."/>
            <person name="Pitluck S."/>
            <person name="Di Bartolo G."/>
            <person name="Chain P."/>
            <person name="Malfatti S."/>
            <person name="Shin M."/>
            <person name="Vergez L."/>
            <person name="Schmutz J."/>
            <person name="Larimer F."/>
            <person name="Land M."/>
            <person name="Hauser L."/>
            <person name="Worsham P."/>
            <person name="Chu M."/>
            <person name="Bearden S."/>
            <person name="Garcia E."/>
            <person name="Richardson P."/>
        </authorList>
    </citation>
    <scope>NUCLEOTIDE SEQUENCE [LARGE SCALE GENOMIC DNA]</scope>
    <source>
        <strain>Pestoides F</strain>
    </source>
</reference>